<reference key="1">
    <citation type="submission" date="2007-06" db="EMBL/GenBank/DDBJ databases">
        <title>Complete sequence of Marinomonas sp. MWYL1.</title>
        <authorList>
            <consortium name="US DOE Joint Genome Institute"/>
            <person name="Copeland A."/>
            <person name="Lucas S."/>
            <person name="Lapidus A."/>
            <person name="Barry K."/>
            <person name="Glavina del Rio T."/>
            <person name="Dalin E."/>
            <person name="Tice H."/>
            <person name="Pitluck S."/>
            <person name="Kiss H."/>
            <person name="Brettin T."/>
            <person name="Bruce D."/>
            <person name="Detter J.C."/>
            <person name="Han C."/>
            <person name="Schmutz J."/>
            <person name="Larimer F."/>
            <person name="Land M."/>
            <person name="Hauser L."/>
            <person name="Kyrpides N."/>
            <person name="Kim E."/>
            <person name="Johnston A.W.B."/>
            <person name="Todd J.D."/>
            <person name="Rogers R."/>
            <person name="Wexler M."/>
            <person name="Bond P.L."/>
            <person name="Li Y."/>
            <person name="Richardson P."/>
        </authorList>
    </citation>
    <scope>NUCLEOTIDE SEQUENCE [LARGE SCALE GENOMIC DNA]</scope>
    <source>
        <strain>MWYL1</strain>
    </source>
</reference>
<protein>
    <recommendedName>
        <fullName evidence="1">3-hydroxyacyl-[acyl-carrier-protein] dehydratase FabZ</fullName>
        <ecNumber evidence="1">4.2.1.59</ecNumber>
    </recommendedName>
    <alternativeName>
        <fullName evidence="1">(3R)-hydroxymyristoyl-[acyl-carrier-protein] dehydratase</fullName>
        <shortName evidence="1">(3R)-hydroxymyristoyl-ACP dehydrase</shortName>
    </alternativeName>
    <alternativeName>
        <fullName evidence="1">Beta-hydroxyacyl-ACP dehydratase</fullName>
    </alternativeName>
</protein>
<accession>A6VUT3</accession>
<comment type="function">
    <text evidence="1">Involved in unsaturated fatty acids biosynthesis. Catalyzes the dehydration of short chain beta-hydroxyacyl-ACPs and long chain saturated and unsaturated beta-hydroxyacyl-ACPs.</text>
</comment>
<comment type="catalytic activity">
    <reaction evidence="1">
        <text>a (3R)-hydroxyacyl-[ACP] = a (2E)-enoyl-[ACP] + H2O</text>
        <dbReference type="Rhea" id="RHEA:13097"/>
        <dbReference type="Rhea" id="RHEA-COMP:9925"/>
        <dbReference type="Rhea" id="RHEA-COMP:9945"/>
        <dbReference type="ChEBI" id="CHEBI:15377"/>
        <dbReference type="ChEBI" id="CHEBI:78784"/>
        <dbReference type="ChEBI" id="CHEBI:78827"/>
        <dbReference type="EC" id="4.2.1.59"/>
    </reaction>
</comment>
<comment type="subcellular location">
    <subcellularLocation>
        <location evidence="1">Cytoplasm</location>
    </subcellularLocation>
</comment>
<comment type="similarity">
    <text evidence="1">Belongs to the thioester dehydratase family. FabZ subfamily.</text>
</comment>
<gene>
    <name evidence="1" type="primary">fabZ</name>
    <name type="ordered locus">Mmwyl1_1283</name>
</gene>
<keyword id="KW-0963">Cytoplasm</keyword>
<keyword id="KW-0441">Lipid A biosynthesis</keyword>
<keyword id="KW-0444">Lipid biosynthesis</keyword>
<keyword id="KW-0443">Lipid metabolism</keyword>
<keyword id="KW-0456">Lyase</keyword>
<name>FABZ_MARMS</name>
<organism>
    <name type="scientific">Marinomonas sp. (strain MWYL1)</name>
    <dbReference type="NCBI Taxonomy" id="400668"/>
    <lineage>
        <taxon>Bacteria</taxon>
        <taxon>Pseudomonadati</taxon>
        <taxon>Pseudomonadota</taxon>
        <taxon>Gammaproteobacteria</taxon>
        <taxon>Oceanospirillales</taxon>
        <taxon>Oceanospirillaceae</taxon>
        <taxon>Marinomonas</taxon>
    </lineage>
</organism>
<evidence type="ECO:0000255" key="1">
    <source>
        <dbReference type="HAMAP-Rule" id="MF_00406"/>
    </source>
</evidence>
<feature type="chain" id="PRO_1000080440" description="3-hydroxyacyl-[acyl-carrier-protein] dehydratase FabZ">
    <location>
        <begin position="1"/>
        <end position="145"/>
    </location>
</feature>
<feature type="active site" evidence="1">
    <location>
        <position position="48"/>
    </location>
</feature>
<proteinExistence type="inferred from homology"/>
<sequence length="145" mass="16415">MMDVNEIRQYLPHRYPFLLVDRIVEINLNDSIIAYKNVTINEPFFNGHFPNHPVMPGVLIIEAMAQAAGVLGFKSMDKKPEDGSIYYFVGADNARFKRPVVPGDRLQLEAKIIAEKRGIWKFECRATVDGQLACSATIMCADRKI</sequence>
<dbReference type="EC" id="4.2.1.59" evidence="1"/>
<dbReference type="EMBL" id="CP000749">
    <property type="protein sequence ID" value="ABR70212.1"/>
    <property type="molecule type" value="Genomic_DNA"/>
</dbReference>
<dbReference type="SMR" id="A6VUT3"/>
<dbReference type="STRING" id="400668.Mmwyl1_1283"/>
<dbReference type="KEGG" id="mmw:Mmwyl1_1283"/>
<dbReference type="eggNOG" id="COG0764">
    <property type="taxonomic scope" value="Bacteria"/>
</dbReference>
<dbReference type="HOGENOM" id="CLU_078912_1_2_6"/>
<dbReference type="OrthoDB" id="9772788at2"/>
<dbReference type="GO" id="GO:0005737">
    <property type="term" value="C:cytoplasm"/>
    <property type="evidence" value="ECO:0007669"/>
    <property type="project" value="UniProtKB-SubCell"/>
</dbReference>
<dbReference type="GO" id="GO:0016020">
    <property type="term" value="C:membrane"/>
    <property type="evidence" value="ECO:0007669"/>
    <property type="project" value="GOC"/>
</dbReference>
<dbReference type="GO" id="GO:0019171">
    <property type="term" value="F:(3R)-hydroxyacyl-[acyl-carrier-protein] dehydratase activity"/>
    <property type="evidence" value="ECO:0007669"/>
    <property type="project" value="UniProtKB-EC"/>
</dbReference>
<dbReference type="GO" id="GO:0006633">
    <property type="term" value="P:fatty acid biosynthetic process"/>
    <property type="evidence" value="ECO:0007669"/>
    <property type="project" value="UniProtKB-UniRule"/>
</dbReference>
<dbReference type="GO" id="GO:0009245">
    <property type="term" value="P:lipid A biosynthetic process"/>
    <property type="evidence" value="ECO:0007669"/>
    <property type="project" value="UniProtKB-UniRule"/>
</dbReference>
<dbReference type="CDD" id="cd01288">
    <property type="entry name" value="FabZ"/>
    <property type="match status" value="1"/>
</dbReference>
<dbReference type="FunFam" id="3.10.129.10:FF:000001">
    <property type="entry name" value="3-hydroxyacyl-[acyl-carrier-protein] dehydratase FabZ"/>
    <property type="match status" value="1"/>
</dbReference>
<dbReference type="Gene3D" id="3.10.129.10">
    <property type="entry name" value="Hotdog Thioesterase"/>
    <property type="match status" value="1"/>
</dbReference>
<dbReference type="HAMAP" id="MF_00406">
    <property type="entry name" value="FabZ"/>
    <property type="match status" value="1"/>
</dbReference>
<dbReference type="InterPro" id="IPR013114">
    <property type="entry name" value="FabA_FabZ"/>
</dbReference>
<dbReference type="InterPro" id="IPR010084">
    <property type="entry name" value="FabZ"/>
</dbReference>
<dbReference type="InterPro" id="IPR029069">
    <property type="entry name" value="HotDog_dom_sf"/>
</dbReference>
<dbReference type="NCBIfam" id="TIGR01750">
    <property type="entry name" value="fabZ"/>
    <property type="match status" value="1"/>
</dbReference>
<dbReference type="NCBIfam" id="NF000582">
    <property type="entry name" value="PRK00006.1"/>
    <property type="match status" value="1"/>
</dbReference>
<dbReference type="PANTHER" id="PTHR30272">
    <property type="entry name" value="3-HYDROXYACYL-[ACYL-CARRIER-PROTEIN] DEHYDRATASE"/>
    <property type="match status" value="1"/>
</dbReference>
<dbReference type="PANTHER" id="PTHR30272:SF1">
    <property type="entry name" value="3-HYDROXYACYL-[ACYL-CARRIER-PROTEIN] DEHYDRATASE"/>
    <property type="match status" value="1"/>
</dbReference>
<dbReference type="Pfam" id="PF07977">
    <property type="entry name" value="FabA"/>
    <property type="match status" value="1"/>
</dbReference>
<dbReference type="SUPFAM" id="SSF54637">
    <property type="entry name" value="Thioesterase/thiol ester dehydrase-isomerase"/>
    <property type="match status" value="1"/>
</dbReference>